<protein>
    <recommendedName>
        <fullName>Zinc finger protein ZPR1</fullName>
    </recommendedName>
    <alternativeName>
        <fullName>Zinc finger protein 259</fullName>
    </alternativeName>
</protein>
<name>ZPR1_MOUSE</name>
<comment type="function">
    <text evidence="2 4 6 9 10">Acts as a signaling molecule that communicates proliferative growth signals from the cytoplasm to the nucleus. It is involved in the positive regulation of cell cycle progression (By similarity). Plays a role for the localization and accumulation of the survival motor neuron protein SMN1 in sub-nuclear bodies, including gems and Cajal bodies. Induces neuron differentiation and stimulates axonal growth and formation of growth cone in spinal cord motor neurons. Plays a role in the splicing of cellular pre-mRNAs. May be involved in H(2)O(2)-induced neuronal cell death.</text>
</comment>
<comment type="subunit">
    <text evidence="1 7 8 9 10 11">Component of an import snRNP complex composed of KPNB1, SNUPN, SMN1 and ZNF259. Interacts (via C-terminal region) with SMN1 (via C-terminal region); the interaction occurs after treatment with serum (By similarity). Interacts with elongation factor 1-alpha EEF1A1; the interaction occurs in a epidermal growth factor (EGF)-dependent manner. Interacts (via zinc fingers) with EGFR (via C-terminal cytoplasmic kinase domain); the interaction is negatively regulated in response to epidermal growth factor (EGF) stimulation and EGFR kinase activity. May also bind to the PDGFR receptor.</text>
</comment>
<comment type="interaction">
    <interactant intactId="EBI-11566629">
        <id>Q62384</id>
    </interactant>
    <interactant intactId="EBI-6314">
        <id>P02994</id>
        <label>TEF2</label>
    </interactant>
    <organismsDiffer>true</organismsDiffer>
    <experiments>2</experiments>
</comment>
<comment type="subcellular location">
    <subcellularLocation>
        <location>Nucleus</location>
    </subcellularLocation>
    <subcellularLocation>
        <location>Cytoplasm</location>
    </subcellularLocation>
    <subcellularLocation>
        <location>Nucleus</location>
        <location>Nucleolus</location>
    </subcellularLocation>
    <subcellularLocation>
        <location evidence="1">Cytoplasm</location>
        <location evidence="1">Perinuclear region</location>
    </subcellularLocation>
    <subcellularLocation>
        <location>Nucleus</location>
        <location>Gem</location>
    </subcellularLocation>
    <subcellularLocation>
        <location>Nucleus</location>
        <location>Cajal body</location>
    </subcellularLocation>
    <subcellularLocation>
        <location>Cell projection</location>
        <location>Axon</location>
    </subcellularLocation>
    <subcellularLocation>
        <location>Cell projection</location>
        <location>Growth cone</location>
    </subcellularLocation>
    <text evidence="1">Localized predominantly in the cytoplasm in serum-starved cells growth arrested in G0 of the mitotic cell cycle. Localized both in the nucleus and cytoplasm at the G1 phase of the mitotic cell cycle. Accumulates in the subnuclear bodies during progression into the S phase of the mitotic cell cycle. Diffusely localized throughout the cell during mitosis. Colocalized with NPAT and SMN1 in nuclear bodies including gems (Gemini of coiled bodies) and Cajal bodies in a cell cycle-dependent manner. Colocalized with EGFR in the cytoplasm of quiescent cells. Translocates from the cytoplasm to the nucleus in a epidermal growth factor (EGF)-dependent manner (By similarity). Translocates together with EEF1A1 from the cytoplasm to the nucleolus after treatment with mitogens. Colocalized with SMN1 in Gemini of coiled bodies (gems), Cajal bodies, axon and growth cones of neurons.</text>
</comment>
<comment type="tissue specificity">
    <text evidence="5 6 10">Expressed in brain. Expressed in the spinal cord motor neurons (at protein level). Expressed in spleen, liver, muscle, kidney and testis. Expressed in the frontal cortex, cornus ammonis, dentate gyrus of the hippocampus and in Purkinje cells of the cerebellum.</text>
</comment>
<comment type="induction">
    <text evidence="5">Up-regulated by high fat diet.</text>
</comment>
<comment type="disease">
    <text evidence="6">May contribute to the severity of spinal muscular atrophy by increasing spinal motor neurons degeneration.</text>
</comment>
<comment type="disruption phenotype">
    <text evidence="4">Die during early embryonic development. Embryos show growth delay, failed to form normal trophectoderm and to expand the inner cell mass.</text>
</comment>
<comment type="similarity">
    <text evidence="12">Belongs to the ZPR1 family.</text>
</comment>
<gene>
    <name type="primary">Zpr1</name>
    <name type="synonym">Zfp259</name>
    <name type="synonym">Znf259</name>
</gene>
<evidence type="ECO:0000250" key="1"/>
<evidence type="ECO:0000250" key="2">
    <source>
        <dbReference type="UniProtKB" id="O75312"/>
    </source>
</evidence>
<evidence type="ECO:0000256" key="3">
    <source>
        <dbReference type="SAM" id="MobiDB-lite"/>
    </source>
</evidence>
<evidence type="ECO:0000269" key="4">
    <source>
    </source>
</evidence>
<evidence type="ECO:0000269" key="5">
    <source>
    </source>
</evidence>
<evidence type="ECO:0000269" key="6">
    <source>
    </source>
</evidence>
<evidence type="ECO:0000269" key="7">
    <source>
    </source>
</evidence>
<evidence type="ECO:0000269" key="8">
    <source>
    </source>
</evidence>
<evidence type="ECO:0000269" key="9">
    <source>
    </source>
</evidence>
<evidence type="ECO:0000269" key="10">
    <source>
    </source>
</evidence>
<evidence type="ECO:0000269" key="11">
    <source>
    </source>
</evidence>
<evidence type="ECO:0000305" key="12"/>
<evidence type="ECO:0007829" key="13">
    <source>
        <dbReference type="PDB" id="2QKD"/>
    </source>
</evidence>
<reference key="1">
    <citation type="journal article" date="1996" name="Science">
        <title>Binding of zinc finger protein ZPR1 to the epidermal growth factor receptor.</title>
        <authorList>
            <person name="Galcheva-Gargova Z."/>
            <person name="Konstantinov K.N."/>
            <person name="Wu I.-H."/>
            <person name="Klier F.G."/>
            <person name="Barrett T."/>
            <person name="Davis R.J."/>
        </authorList>
    </citation>
    <scope>NUCLEOTIDE SEQUENCE [MRNA]</scope>
    <scope>FUNCTION</scope>
    <scope>INTERACTION WITH EGFR</scope>
    <scope>SUBCELLULAR LOCATION</scope>
    <scope>TISSUE SPECIFICITY</scope>
</reference>
<reference key="2">
    <citation type="journal article" date="1998" name="J. Cell Biol.">
        <title>Interaction of ZPR1 with translation elongation factor-1alpha in proliferating cells.</title>
        <authorList>
            <person name="Gangwani L."/>
            <person name="Mikrut M."/>
            <person name="Galcheva-Gargova Z."/>
            <person name="Davis R.J."/>
        </authorList>
    </citation>
    <scope>NUCLEOTIDE SEQUENCE [MRNA]</scope>
    <scope>INTERACTION WITH EEF1A1 AND EGFR</scope>
    <scope>SUBCELLULAR LOCATION</scope>
</reference>
<reference key="3">
    <citation type="journal article" date="2004" name="Genome Res.">
        <title>The status, quality, and expansion of the NIH full-length cDNA project: the Mammalian Gene Collection (MGC).</title>
        <authorList>
            <consortium name="The MGC Project Team"/>
        </authorList>
    </citation>
    <scope>NUCLEOTIDE SEQUENCE [LARGE SCALE MRNA]</scope>
    <source>
        <strain>Czech II</strain>
        <tissue>Mammary gland</tissue>
    </source>
</reference>
<reference key="4">
    <citation type="journal article" date="1998" name="Mol. Biol. Cell">
        <title>The cytoplasmic zinc finger protein ZPR1 accumulates in the nucleolus of proliferating cells.</title>
        <authorList>
            <person name="Galcheva-Gargova Z."/>
            <person name="Gangwani L."/>
            <person name="Konstantinov K.N."/>
            <person name="Mikrut M."/>
            <person name="Theroux S.J."/>
            <person name="Enoch T."/>
            <person name="Davis R.J."/>
        </authorList>
    </citation>
    <scope>SUBCELLULAR LOCATION</scope>
</reference>
<reference key="5">
    <citation type="journal article" date="2005" name="Mol. Cell. Biol.">
        <title>ZPR1 is essential for survival and is required for localization of the survival motor neurons (SMN) protein to Cajal bodies.</title>
        <authorList>
            <person name="Gangwani L."/>
            <person name="Flavell R.A."/>
            <person name="Davis R.J."/>
        </authorList>
    </citation>
    <scope>FUNCTION</scope>
    <scope>DISRUPTION PHENOTYPE</scope>
    <scope>SUBCELLULAR LOCATION</scope>
</reference>
<reference key="6">
    <citation type="journal article" date="2006" name="Int. J. Mol. Med.">
        <title>Expression of zinc finger protein ZPR1 mRNA in brain is up-regulated in mice fed a high-fat diet.</title>
        <authorList>
            <person name="Nogusa Y."/>
            <person name="Yanaka N."/>
            <person name="Sumiyoshi N."/>
            <person name="Takeda K."/>
            <person name="Kato N."/>
        </authorList>
    </citation>
    <scope>INDUCTION</scope>
    <scope>TISSUE SPECIFICITY</scope>
</reference>
<reference key="7">
    <citation type="journal article" date="2006" name="Proc. Natl. Acad. Sci. U.S.A.">
        <title>Deficiency of the zinc finger protein ZPR1 causes neurodegeneration.</title>
        <authorList>
            <person name="Doran B."/>
            <person name="Gherbesi N."/>
            <person name="Hendricks G."/>
            <person name="Flavell R.A."/>
            <person name="Davis R.J."/>
            <person name="Gangwani L."/>
        </authorList>
    </citation>
    <scope>FUNCTION</scope>
    <scope>INVOLVEMENT IN NEURODEGENERATION</scope>
    <scope>TISSUE SPECIFICITY</scope>
</reference>
<reference key="8">
    <citation type="journal article" date="2009" name="Biosci. Biotechnol. Biochem.">
        <title>Generation of a zinc finger protein ZPR1 mutant that constitutively interacted with translation elongation factor 1alpha.</title>
        <authorList>
            <person name="Yanaka N."/>
            <person name="Kaseda Y."/>
            <person name="Tanaka A."/>
            <person name="Nogusa Y."/>
            <person name="Sumiyoshi N."/>
            <person name="Kato N."/>
        </authorList>
    </citation>
    <scope>INTERACTION WITH EEF1A1</scope>
</reference>
<reference key="9">
    <citation type="journal article" date="2010" name="Cell">
        <title>A tissue-specific atlas of mouse protein phosphorylation and expression.</title>
        <authorList>
            <person name="Huttlin E.L."/>
            <person name="Jedrychowski M.P."/>
            <person name="Elias J.E."/>
            <person name="Goswami T."/>
            <person name="Rad R."/>
            <person name="Beausoleil S.A."/>
            <person name="Villen J."/>
            <person name="Haas W."/>
            <person name="Sowa M.E."/>
            <person name="Gygi S.P."/>
        </authorList>
    </citation>
    <scope>IDENTIFICATION BY MASS SPECTROMETRY [LARGE SCALE ANALYSIS]</scope>
    <source>
        <tissue>Brain</tissue>
        <tissue>Kidney</tissue>
        <tissue>Liver</tissue>
        <tissue>Lung</tissue>
        <tissue>Pancreas</tissue>
        <tissue>Spleen</tissue>
        <tissue>Testis</tissue>
    </source>
</reference>
<reference key="10">
    <citation type="journal article" date="2012" name="Hum. Mol. Genet.">
        <title>The zinc finger protein ZPR1 is a potential modifier of spinal muscular atrophy.</title>
        <authorList>
            <person name="Ahmad S."/>
            <person name="Wang Y."/>
            <person name="Shaik G.M."/>
            <person name="Burghes A.H."/>
            <person name="Gangwani L."/>
        </authorList>
    </citation>
    <scope>FUNCTION</scope>
    <scope>INTERACTION WITH SMN1</scope>
    <scope>INVOLVEMENT IN NEURODEGENERATION</scope>
    <scope>SUBCELLULAR LOCATION</scope>
</reference>
<reference key="11">
    <citation type="journal article" date="2007" name="Proc. Natl. Acad. Sci. U.S.A.">
        <title>Structural insights into the interaction of the evolutionarily conserved ZPR1 domain tandem with eukaryotic EF1A, receptors, and SMN complexes.</title>
        <authorList>
            <person name="Mishra A.K."/>
            <person name="Gangwani L."/>
            <person name="Davis R.J."/>
            <person name="Lambright D.G."/>
        </authorList>
    </citation>
    <scope>X-RAY CRYSTALLOGRAPHY (2.0 ANGSTROMS) OF 47-440</scope>
    <scope>INTERACTION WITH EF1A</scope>
</reference>
<sequence length="459" mass="50715">MSASGAVQPGHPGAAVGPSPAAAASPATGPLFRPLSAEDEEQQPTEIESLCMNCYRNGTTRLLLTKIPFFREIIVSSFSCEHCGWNNTEIQSAGRIQDQGVRYTLTVRSQEDMNREVVKTDSATTRIPELDFEIPAFSQKGALTTVEGLISRAISGLEQDQPTRRAVEGAIAERIDEFIGKLKDLKQMASPFTLVIDDPSGNSFVENPHAPQKDNALVITYYDRTPQQAEMLGLQAEAPEEKAEEEDLRNEVLQFNTNCPECNAPAQTNMKLVQIPHFKEVIIMATNCENCGHRTNEVKSGGAVEPLGTRITLHITDPSDMTRDLLKSETCSVEIPELEFELGMAVLGGKFTTLEGLLKDIRELVTKNPFTLGDSSNPDQSEKLQEFSQKLGQIIEGKMKAHFIMNDPAGNSYLQNVYAPEDDPEMKVERYKRTFDQNEELGLNDMKTEGYEAGLAPQR</sequence>
<proteinExistence type="evidence at protein level"/>
<keyword id="KW-0002">3D-structure</keyword>
<keyword id="KW-0966">Cell projection</keyword>
<keyword id="KW-0963">Cytoplasm</keyword>
<keyword id="KW-0217">Developmental protein</keyword>
<keyword id="KW-0221">Differentiation</keyword>
<keyword id="KW-0479">Metal-binding</keyword>
<keyword id="KW-0507">mRNA processing</keyword>
<keyword id="KW-0508">mRNA splicing</keyword>
<keyword id="KW-0539">Nucleus</keyword>
<keyword id="KW-1185">Reference proteome</keyword>
<keyword id="KW-0677">Repeat</keyword>
<keyword id="KW-0862">Zinc</keyword>
<keyword id="KW-0863">Zinc-finger</keyword>
<accession>Q62384</accession>
<organism>
    <name type="scientific">Mus musculus</name>
    <name type="common">Mouse</name>
    <dbReference type="NCBI Taxonomy" id="10090"/>
    <lineage>
        <taxon>Eukaryota</taxon>
        <taxon>Metazoa</taxon>
        <taxon>Chordata</taxon>
        <taxon>Craniata</taxon>
        <taxon>Vertebrata</taxon>
        <taxon>Euteleostomi</taxon>
        <taxon>Mammalia</taxon>
        <taxon>Eutheria</taxon>
        <taxon>Euarchontoglires</taxon>
        <taxon>Glires</taxon>
        <taxon>Rodentia</taxon>
        <taxon>Myomorpha</taxon>
        <taxon>Muroidea</taxon>
        <taxon>Muridae</taxon>
        <taxon>Murinae</taxon>
        <taxon>Mus</taxon>
        <taxon>Mus</taxon>
    </lineage>
</organism>
<dbReference type="EMBL" id="U41287">
    <property type="protein sequence ID" value="AAC52662.1"/>
    <property type="molecule type" value="mRNA"/>
</dbReference>
<dbReference type="EMBL" id="BC021397">
    <property type="protein sequence ID" value="AAH21397.1"/>
    <property type="molecule type" value="mRNA"/>
</dbReference>
<dbReference type="CCDS" id="CCDS23144.1"/>
<dbReference type="RefSeq" id="NP_035882.1">
    <property type="nucleotide sequence ID" value="NM_011752.2"/>
</dbReference>
<dbReference type="PDB" id="2QKD">
    <property type="method" value="X-ray"/>
    <property type="resolution" value="2.00 A"/>
    <property type="chains" value="A=47-440"/>
</dbReference>
<dbReference type="PDBsum" id="2QKD"/>
<dbReference type="SMR" id="Q62384"/>
<dbReference type="BioGRID" id="204651">
    <property type="interactions" value="11"/>
</dbReference>
<dbReference type="DIP" id="DIP-46465N"/>
<dbReference type="FunCoup" id="Q62384">
    <property type="interactions" value="3526"/>
</dbReference>
<dbReference type="IntAct" id="Q62384">
    <property type="interactions" value="4"/>
</dbReference>
<dbReference type="STRING" id="10090.ENSMUSP00000117725"/>
<dbReference type="GlyGen" id="Q62384">
    <property type="glycosylation" value="1 site"/>
</dbReference>
<dbReference type="iPTMnet" id="Q62384"/>
<dbReference type="PhosphoSitePlus" id="Q62384"/>
<dbReference type="SwissPalm" id="Q62384"/>
<dbReference type="PaxDb" id="10090-ENSMUSP00000117725"/>
<dbReference type="PeptideAtlas" id="Q62384"/>
<dbReference type="ProteomicsDB" id="275242"/>
<dbReference type="Pumba" id="Q62384"/>
<dbReference type="Antibodypedia" id="18410">
    <property type="antibodies" value="271 antibodies from 28 providers"/>
</dbReference>
<dbReference type="DNASU" id="22687"/>
<dbReference type="Ensembl" id="ENSMUST00000156440.8">
    <property type="protein sequence ID" value="ENSMUSP00000117725.2"/>
    <property type="gene ID" value="ENSMUSG00000032078.18"/>
</dbReference>
<dbReference type="GeneID" id="22687"/>
<dbReference type="KEGG" id="mmu:22687"/>
<dbReference type="UCSC" id="uc009phh.1">
    <property type="organism name" value="mouse"/>
</dbReference>
<dbReference type="AGR" id="MGI:1330262"/>
<dbReference type="CTD" id="8882"/>
<dbReference type="MGI" id="MGI:1330262">
    <property type="gene designation" value="Zpr1"/>
</dbReference>
<dbReference type="VEuPathDB" id="HostDB:ENSMUSG00000032078"/>
<dbReference type="eggNOG" id="KOG2703">
    <property type="taxonomic scope" value="Eukaryota"/>
</dbReference>
<dbReference type="GeneTree" id="ENSGT00390000005306"/>
<dbReference type="HOGENOM" id="CLU_024138_5_0_1"/>
<dbReference type="InParanoid" id="Q62384"/>
<dbReference type="OMA" id="FREVVIM"/>
<dbReference type="OrthoDB" id="308464at2759"/>
<dbReference type="PhylomeDB" id="Q62384"/>
<dbReference type="TreeFam" id="TF313084"/>
<dbReference type="BioGRID-ORCS" id="22687">
    <property type="hits" value="30 hits in 82 CRISPR screens"/>
</dbReference>
<dbReference type="ChiTaRS" id="Zpr1">
    <property type="organism name" value="mouse"/>
</dbReference>
<dbReference type="EvolutionaryTrace" id="Q62384"/>
<dbReference type="PRO" id="PR:Q62384"/>
<dbReference type="Proteomes" id="UP000000589">
    <property type="component" value="Chromosome 9"/>
</dbReference>
<dbReference type="RNAct" id="Q62384">
    <property type="molecule type" value="protein"/>
</dbReference>
<dbReference type="Bgee" id="ENSMUSG00000032078">
    <property type="expression patterns" value="Expressed in ectoplacental cone and 266 other cell types or tissues"/>
</dbReference>
<dbReference type="ExpressionAtlas" id="Q62384">
    <property type="expression patterns" value="baseline and differential"/>
</dbReference>
<dbReference type="GO" id="GO:0030424">
    <property type="term" value="C:axon"/>
    <property type="evidence" value="ECO:0000314"/>
    <property type="project" value="UniProtKB"/>
</dbReference>
<dbReference type="GO" id="GO:0015030">
    <property type="term" value="C:Cajal body"/>
    <property type="evidence" value="ECO:0000314"/>
    <property type="project" value="UniProtKB"/>
</dbReference>
<dbReference type="GO" id="GO:0005737">
    <property type="term" value="C:cytoplasm"/>
    <property type="evidence" value="ECO:0000314"/>
    <property type="project" value="MGI"/>
</dbReference>
<dbReference type="GO" id="GO:0097504">
    <property type="term" value="C:Gemini of Cajal bodies"/>
    <property type="evidence" value="ECO:0000314"/>
    <property type="project" value="UniProtKB"/>
</dbReference>
<dbReference type="GO" id="GO:0030426">
    <property type="term" value="C:growth cone"/>
    <property type="evidence" value="ECO:0000314"/>
    <property type="project" value="UniProtKB"/>
</dbReference>
<dbReference type="GO" id="GO:0043025">
    <property type="term" value="C:neuronal cell body"/>
    <property type="evidence" value="ECO:0000314"/>
    <property type="project" value="UniProtKB"/>
</dbReference>
<dbReference type="GO" id="GO:0005730">
    <property type="term" value="C:nucleolus"/>
    <property type="evidence" value="ECO:0000250"/>
    <property type="project" value="UniProtKB"/>
</dbReference>
<dbReference type="GO" id="GO:0005654">
    <property type="term" value="C:nucleoplasm"/>
    <property type="evidence" value="ECO:0000250"/>
    <property type="project" value="UniProtKB"/>
</dbReference>
<dbReference type="GO" id="GO:0005634">
    <property type="term" value="C:nucleus"/>
    <property type="evidence" value="ECO:0000314"/>
    <property type="project" value="MGI"/>
</dbReference>
<dbReference type="GO" id="GO:0043204">
    <property type="term" value="C:perikaryon"/>
    <property type="evidence" value="ECO:0000314"/>
    <property type="project" value="UniProtKB"/>
</dbReference>
<dbReference type="GO" id="GO:0048471">
    <property type="term" value="C:perinuclear region of cytoplasm"/>
    <property type="evidence" value="ECO:0007669"/>
    <property type="project" value="UniProtKB-SubCell"/>
</dbReference>
<dbReference type="GO" id="GO:0044183">
    <property type="term" value="F:protein folding chaperone"/>
    <property type="evidence" value="ECO:0000250"/>
    <property type="project" value="UniProtKB"/>
</dbReference>
<dbReference type="GO" id="GO:0030971">
    <property type="term" value="F:receptor tyrosine kinase binding"/>
    <property type="evidence" value="ECO:0000353"/>
    <property type="project" value="UniProtKB"/>
</dbReference>
<dbReference type="GO" id="GO:0031369">
    <property type="term" value="F:translation initiation factor binding"/>
    <property type="evidence" value="ECO:0000353"/>
    <property type="project" value="UniProtKB"/>
</dbReference>
<dbReference type="GO" id="GO:0008270">
    <property type="term" value="F:zinc ion binding"/>
    <property type="evidence" value="ECO:0000314"/>
    <property type="project" value="MGI"/>
</dbReference>
<dbReference type="GO" id="GO:1902742">
    <property type="term" value="P:apoptotic process involved in development"/>
    <property type="evidence" value="ECO:0000315"/>
    <property type="project" value="UniProtKB"/>
</dbReference>
<dbReference type="GO" id="GO:0061564">
    <property type="term" value="P:axon development"/>
    <property type="evidence" value="ECO:0000315"/>
    <property type="project" value="UniProtKB"/>
</dbReference>
<dbReference type="GO" id="GO:0030576">
    <property type="term" value="P:Cajal body organization"/>
    <property type="evidence" value="ECO:0000315"/>
    <property type="project" value="UniProtKB"/>
</dbReference>
<dbReference type="GO" id="GO:0071364">
    <property type="term" value="P:cellular response to epidermal growth factor stimulus"/>
    <property type="evidence" value="ECO:0000250"/>
    <property type="project" value="UniProtKB"/>
</dbReference>
<dbReference type="GO" id="GO:0042023">
    <property type="term" value="P:DNA endoreduplication"/>
    <property type="evidence" value="ECO:0000315"/>
    <property type="project" value="UniProtKB"/>
</dbReference>
<dbReference type="GO" id="GO:0006260">
    <property type="term" value="P:DNA replication"/>
    <property type="evidence" value="ECO:0000250"/>
    <property type="project" value="UniProtKB"/>
</dbReference>
<dbReference type="GO" id="GO:0001833">
    <property type="term" value="P:inner cell mass cell proliferation"/>
    <property type="evidence" value="ECO:0000315"/>
    <property type="project" value="UniProtKB"/>
</dbReference>
<dbReference type="GO" id="GO:0000226">
    <property type="term" value="P:microtubule cytoskeleton organization"/>
    <property type="evidence" value="ECO:0000315"/>
    <property type="project" value="UniProtKB"/>
</dbReference>
<dbReference type="GO" id="GO:0006397">
    <property type="term" value="P:mRNA processing"/>
    <property type="evidence" value="ECO:0007669"/>
    <property type="project" value="UniProtKB-KW"/>
</dbReference>
<dbReference type="GO" id="GO:2000672">
    <property type="term" value="P:negative regulation of motor neuron apoptotic process"/>
    <property type="evidence" value="ECO:0000315"/>
    <property type="project" value="UniProtKB"/>
</dbReference>
<dbReference type="GO" id="GO:0045787">
    <property type="term" value="P:positive regulation of cell cycle"/>
    <property type="evidence" value="ECO:0007669"/>
    <property type="project" value="Ensembl"/>
</dbReference>
<dbReference type="GO" id="GO:0010628">
    <property type="term" value="P:positive regulation of gene expression"/>
    <property type="evidence" value="ECO:0000315"/>
    <property type="project" value="UniProtKB"/>
</dbReference>
<dbReference type="GO" id="GO:0045927">
    <property type="term" value="P:positive regulation of growth"/>
    <property type="evidence" value="ECO:0000315"/>
    <property type="project" value="UniProtKB"/>
</dbReference>
<dbReference type="GO" id="GO:0042307">
    <property type="term" value="P:positive regulation of protein import into nucleus"/>
    <property type="evidence" value="ECO:0000315"/>
    <property type="project" value="UniProtKB"/>
</dbReference>
<dbReference type="GO" id="GO:0033120">
    <property type="term" value="P:positive regulation of RNA splicing"/>
    <property type="evidence" value="ECO:0000250"/>
    <property type="project" value="UniProtKB"/>
</dbReference>
<dbReference type="GO" id="GO:1990261">
    <property type="term" value="P:pre-mRNA catabolic process"/>
    <property type="evidence" value="ECO:0000250"/>
    <property type="project" value="UniProtKB"/>
</dbReference>
<dbReference type="GO" id="GO:0006457">
    <property type="term" value="P:protein folding"/>
    <property type="evidence" value="ECO:0000250"/>
    <property type="project" value="UniProtKB"/>
</dbReference>
<dbReference type="GO" id="GO:0031641">
    <property type="term" value="P:regulation of myelination"/>
    <property type="evidence" value="ECO:0000315"/>
    <property type="project" value="UniProtKB"/>
</dbReference>
<dbReference type="GO" id="GO:0008380">
    <property type="term" value="P:RNA splicing"/>
    <property type="evidence" value="ECO:0007669"/>
    <property type="project" value="UniProtKB-KW"/>
</dbReference>
<dbReference type="GO" id="GO:0021510">
    <property type="term" value="P:spinal cord development"/>
    <property type="evidence" value="ECO:0000315"/>
    <property type="project" value="UniProtKB"/>
</dbReference>
<dbReference type="GO" id="GO:0001834">
    <property type="term" value="P:trophectodermal cell proliferation"/>
    <property type="evidence" value="ECO:0000315"/>
    <property type="project" value="UniProtKB"/>
</dbReference>
<dbReference type="FunFam" id="2.20.25.420:FF:000001">
    <property type="entry name" value="Zinc finger protein ZPR1"/>
    <property type="match status" value="1"/>
</dbReference>
<dbReference type="FunFam" id="2.60.120.1040:FF:000001">
    <property type="entry name" value="Zinc finger protein ZPR1"/>
    <property type="match status" value="1"/>
</dbReference>
<dbReference type="FunFam" id="2.20.25.420:FF:000003">
    <property type="entry name" value="zinc finger protein ZPR1"/>
    <property type="match status" value="1"/>
</dbReference>
<dbReference type="FunFam" id="2.60.120.1040:FF:000002">
    <property type="entry name" value="zinc finger protein ZPR1"/>
    <property type="match status" value="1"/>
</dbReference>
<dbReference type="Gene3D" id="2.60.120.1040">
    <property type="entry name" value="ZPR1, A/B domain"/>
    <property type="match status" value="2"/>
</dbReference>
<dbReference type="Gene3D" id="2.20.25.420">
    <property type="entry name" value="ZPR1, zinc finger domain"/>
    <property type="match status" value="2"/>
</dbReference>
<dbReference type="InterPro" id="IPR004457">
    <property type="entry name" value="Znf_ZPR1"/>
</dbReference>
<dbReference type="InterPro" id="IPR040141">
    <property type="entry name" value="ZPR1"/>
</dbReference>
<dbReference type="InterPro" id="IPR042451">
    <property type="entry name" value="ZPR1_A/B_dom"/>
</dbReference>
<dbReference type="InterPro" id="IPR056180">
    <property type="entry name" value="ZPR1_jr_dom"/>
</dbReference>
<dbReference type="InterPro" id="IPR042452">
    <property type="entry name" value="ZPR1_Znf1/2"/>
</dbReference>
<dbReference type="NCBIfam" id="TIGR00310">
    <property type="entry name" value="ZPR1_znf"/>
    <property type="match status" value="2"/>
</dbReference>
<dbReference type="PANTHER" id="PTHR10876">
    <property type="entry name" value="ZINC FINGER PROTEIN ZPR1"/>
    <property type="match status" value="1"/>
</dbReference>
<dbReference type="PANTHER" id="PTHR10876:SF0">
    <property type="entry name" value="ZINC FINGER PROTEIN ZPR1"/>
    <property type="match status" value="1"/>
</dbReference>
<dbReference type="Pfam" id="PF22794">
    <property type="entry name" value="jr-ZPR1"/>
    <property type="match status" value="2"/>
</dbReference>
<dbReference type="Pfam" id="PF03367">
    <property type="entry name" value="Zn_ribbon_ZPR1"/>
    <property type="match status" value="2"/>
</dbReference>
<dbReference type="SMART" id="SM00709">
    <property type="entry name" value="Zpr1"/>
    <property type="match status" value="2"/>
</dbReference>
<feature type="chain" id="PRO_0000119037" description="Zinc finger protein ZPR1">
    <location>
        <begin position="1"/>
        <end position="459"/>
    </location>
</feature>
<feature type="zinc finger region" description="C4-type 1">
    <location>
        <begin position="51"/>
        <end position="83"/>
    </location>
</feature>
<feature type="zinc finger region" description="C4-type 2">
    <location>
        <begin position="259"/>
        <end position="291"/>
    </location>
</feature>
<feature type="region of interest" description="Disordered" evidence="3">
    <location>
        <begin position="1"/>
        <end position="43"/>
    </location>
</feature>
<feature type="region of interest" description="Disordered" evidence="3">
    <location>
        <begin position="439"/>
        <end position="459"/>
    </location>
</feature>
<feature type="compositionally biased region" description="Low complexity" evidence="3">
    <location>
        <begin position="9"/>
        <end position="30"/>
    </location>
</feature>
<feature type="strand" evidence="13">
    <location>
        <begin position="48"/>
        <end position="50"/>
    </location>
</feature>
<feature type="turn" evidence="13">
    <location>
        <begin position="52"/>
        <end position="54"/>
    </location>
</feature>
<feature type="strand" evidence="13">
    <location>
        <begin position="55"/>
        <end position="67"/>
    </location>
</feature>
<feature type="turn" evidence="13">
    <location>
        <begin position="68"/>
        <end position="70"/>
    </location>
</feature>
<feature type="strand" evidence="13">
    <location>
        <begin position="71"/>
        <end position="79"/>
    </location>
</feature>
<feature type="turn" evidence="13">
    <location>
        <begin position="81"/>
        <end position="83"/>
    </location>
</feature>
<feature type="strand" evidence="13">
    <location>
        <begin position="86"/>
        <end position="96"/>
    </location>
</feature>
<feature type="strand" evidence="13">
    <location>
        <begin position="98"/>
        <end position="107"/>
    </location>
</feature>
<feature type="helix" evidence="13">
    <location>
        <begin position="110"/>
        <end position="113"/>
    </location>
</feature>
<feature type="strand" evidence="13">
    <location>
        <begin position="116"/>
        <end position="119"/>
    </location>
</feature>
<feature type="strand" evidence="13">
    <location>
        <begin position="124"/>
        <end position="127"/>
    </location>
</feature>
<feature type="helix" evidence="13">
    <location>
        <begin position="128"/>
        <end position="130"/>
    </location>
</feature>
<feature type="strand" evidence="13">
    <location>
        <begin position="132"/>
        <end position="134"/>
    </location>
</feature>
<feature type="strand" evidence="13">
    <location>
        <begin position="142"/>
        <end position="145"/>
    </location>
</feature>
<feature type="helix" evidence="13">
    <location>
        <begin position="146"/>
        <end position="158"/>
    </location>
</feature>
<feature type="helix" evidence="13">
    <location>
        <begin position="161"/>
        <end position="167"/>
    </location>
</feature>
<feature type="helix" evidence="13">
    <location>
        <begin position="169"/>
        <end position="184"/>
    </location>
</feature>
<feature type="helix" evidence="13">
    <location>
        <begin position="185"/>
        <end position="187"/>
    </location>
</feature>
<feature type="strand" evidence="13">
    <location>
        <begin position="192"/>
        <end position="198"/>
    </location>
</feature>
<feature type="turn" evidence="13">
    <location>
        <begin position="208"/>
        <end position="211"/>
    </location>
</feature>
<feature type="strand" evidence="13">
    <location>
        <begin position="217"/>
        <end position="222"/>
    </location>
</feature>
<feature type="helix" evidence="13">
    <location>
        <begin position="226"/>
        <end position="231"/>
    </location>
</feature>
<feature type="strand" evidence="13">
    <location>
        <begin position="252"/>
        <end position="257"/>
    </location>
</feature>
<feature type="turn" evidence="13">
    <location>
        <begin position="260"/>
        <end position="262"/>
    </location>
</feature>
<feature type="strand" evidence="13">
    <location>
        <begin position="268"/>
        <end position="273"/>
    </location>
</feature>
<feature type="strand" evidence="13">
    <location>
        <begin position="281"/>
        <end position="287"/>
    </location>
</feature>
<feature type="strand" evidence="13">
    <location>
        <begin position="289"/>
        <end position="291"/>
    </location>
</feature>
<feature type="strand" evidence="13">
    <location>
        <begin position="294"/>
        <end position="300"/>
    </location>
</feature>
<feature type="strand" evidence="13">
    <location>
        <begin position="302"/>
        <end position="304"/>
    </location>
</feature>
<feature type="strand" evidence="13">
    <location>
        <begin position="308"/>
        <end position="315"/>
    </location>
</feature>
<feature type="helix" evidence="13">
    <location>
        <begin position="318"/>
        <end position="322"/>
    </location>
</feature>
<feature type="strand" evidence="13">
    <location>
        <begin position="324"/>
        <end position="327"/>
    </location>
</feature>
<feature type="strand" evidence="13">
    <location>
        <begin position="332"/>
        <end position="335"/>
    </location>
</feature>
<feature type="helix" evidence="13">
    <location>
        <begin position="336"/>
        <end position="338"/>
    </location>
</feature>
<feature type="strand" evidence="13">
    <location>
        <begin position="340"/>
        <end position="342"/>
    </location>
</feature>
<feature type="turn" evidence="13">
    <location>
        <begin position="344"/>
        <end position="347"/>
    </location>
</feature>
<feature type="strand" evidence="13">
    <location>
        <begin position="349"/>
        <end position="353"/>
    </location>
</feature>
<feature type="helix" evidence="13">
    <location>
        <begin position="354"/>
        <end position="366"/>
    </location>
</feature>
<feature type="strand" evidence="13">
    <location>
        <begin position="372"/>
        <end position="374"/>
    </location>
</feature>
<feature type="helix" evidence="13">
    <location>
        <begin position="378"/>
        <end position="380"/>
    </location>
</feature>
<feature type="helix" evidence="13">
    <location>
        <begin position="382"/>
        <end position="395"/>
    </location>
</feature>
<feature type="strand" evidence="13">
    <location>
        <begin position="401"/>
        <end position="407"/>
    </location>
</feature>
<feature type="turn" evidence="13">
    <location>
        <begin position="417"/>
        <end position="420"/>
    </location>
</feature>
<feature type="strand" evidence="13">
    <location>
        <begin position="426"/>
        <end position="431"/>
    </location>
</feature>
<feature type="turn" evidence="13">
    <location>
        <begin position="437"/>
        <end position="439"/>
    </location>
</feature>